<organismHost>
    <name type="scientific">Cavia cutleri</name>
    <name type="common">Guinea pig</name>
    <dbReference type="NCBI Taxonomy" id="10144"/>
</organismHost>
<organismHost>
    <name type="scientific">Cricetidae sp.</name>
    <name type="common">Hamster</name>
    <dbReference type="NCBI Taxonomy" id="36483"/>
</organismHost>
<organismHost>
    <name type="scientific">Mus musculus</name>
    <name type="common">Mouse</name>
    <dbReference type="NCBI Taxonomy" id="10090"/>
</organismHost>
<organismHost>
    <name type="scientific">Rattus norvegicus</name>
    <name type="common">Rat</name>
    <dbReference type="NCBI Taxonomy" id="10116"/>
</organismHost>
<feature type="chain" id="PRO_0000142776" description="Matrix protein">
    <location>
        <begin position="1"/>
        <end position="348"/>
    </location>
</feature>
<feature type="short sequence motif" description="YLDL motif" evidence="1">
    <location>
        <begin position="50"/>
        <end position="53"/>
    </location>
</feature>
<feature type="modified residue" description="Phosphoserine; by host" evidence="9">
    <location>
        <position position="70"/>
    </location>
</feature>
<feature type="sequence variant" description="In wild-type, Mutant F1-R, Mutant F1-R / T-5 revertant, Mutant ts-f1, Mutant KD-11M, Mutant KD-22M, Mutant KD-32M, Mutant 51M and Mutant 52M.">
    <original>D</original>
    <variation>V</variation>
    <location>
        <position position="42"/>
    </location>
</feature>
<feature type="sequence variant" description="In Mutant F1-R and Mutant F1-R / T-5 revertant.">
    <original>D</original>
    <variation>G</variation>
    <location>
        <position position="128"/>
    </location>
</feature>
<feature type="sequence variant" description="In strain: Mutant BY-5.">
    <original>D</original>
    <variation>V</variation>
    <location>
        <position position="128"/>
    </location>
</feature>
<feature type="sequence variant" description="In strain: Mutant KD-32M.">
    <original>V</original>
    <variation>M</variation>
    <location>
        <position position="161"/>
    </location>
</feature>
<feature type="sequence variant" description="In strain: Mutant KD-22M.">
    <original>I</original>
    <variation>V</variation>
    <location>
        <position position="182"/>
    </location>
</feature>
<feature type="sequence variant" description="In strain: Mutant KD-32M.">
    <original>D</original>
    <variation>Y</variation>
    <location>
        <position position="191"/>
    </location>
</feature>
<feature type="sequence variant" description="In strain: Mutant KD-22M.">
    <original>S</original>
    <variation>C</variation>
    <location>
        <position position="197"/>
    </location>
</feature>
<feature type="sequence variant" description="In strain: Mutant F1-R and Mutant F1-R / T-5 revertant.">
    <original>I</original>
    <variation>T</variation>
    <location>
        <position position="210"/>
    </location>
</feature>
<feature type="sequence variant" description="In strain: Mutant KD-51M.">
    <original>S</original>
    <variation>F</variation>
    <location>
        <position position="211"/>
    </location>
</feature>
<feature type="sequence variant" description="In strain: Mutant KD-22M and Mutant KD-51M.">
    <original>T</original>
    <variation>A</variation>
    <location>
        <position position="212"/>
    </location>
</feature>
<feature type="sequence variant" description="In strain: Mutant KD-52M.">
    <original>V</original>
    <variation>A</variation>
    <location>
        <position position="217"/>
    </location>
</feature>
<feature type="sequence variant" description="In strain: Mutant BY-4.">
    <original>MV</original>
    <variation>IL</variation>
    <location>
        <begin position="232"/>
        <end position="233"/>
    </location>
</feature>
<feature type="sequence variant" description="In strain: Mutant BY-4, Mutant BF-13 and Mutant BY-41.">
    <original>L</original>
    <variation>F</variation>
    <location>
        <position position="237"/>
    </location>
</feature>
<feature type="sequence variant" description="In strain: Mutant KD-11M.">
    <original>L</original>
    <variation>M</variation>
    <location>
        <position position="237"/>
    </location>
</feature>
<feature type="sequence variant" description="In strain: Mutant KD-11M.">
    <original>RK</original>
    <variation>SL</variation>
    <location>
        <begin position="240"/>
        <end position="241"/>
    </location>
</feature>
<feature type="sequence variant" description="In strain: Mutant KD-11M.">
    <original>S</original>
    <variation>C</variation>
    <location>
        <position position="253"/>
    </location>
</feature>
<feature type="sequence variant" description="In strain: Mutant BY-5.">
    <original>LGLI</original>
    <variation>VGFV</variation>
    <location>
        <begin position="264"/>
        <end position="267"/>
    </location>
</feature>
<feature type="sequence variant" description="In strain: wild-type, Mutant F1-R, Mutant F1-R / T-5 revertant, Mutant ts-f1, Mutant BY-4, Mutant BY-8, Mutant BY-13, Mutant BF-41, Mutant BF-53, Mutant BF-82, Mutant BF-132, Mutant KD-22M, Mutant KD-32M, Mutant KD-51 and Mutant KD-52M.">
    <original>N</original>
    <variation>I</variation>
    <location>
        <position position="277"/>
    </location>
</feature>
<feature type="sequence variant" description="In strain: Mutant BY-5.">
    <original>N</original>
    <variation>L</variation>
    <location>
        <position position="277"/>
    </location>
</feature>
<feature type="sequence variant" description="In strain: Mutant BY-5.">
    <original>T</original>
    <variation>R</variation>
    <location>
        <position position="279"/>
    </location>
</feature>
<feature type="sequence variant" description="In strain: Mutant KD-52M.">
    <original>V</original>
    <variation>L</variation>
    <location>
        <position position="294"/>
    </location>
</feature>
<feature type="mutagenesis site" description="Complete loss of phosphorylation." evidence="7">
    <original>S</original>
    <variation>A</variation>
    <location>
        <position position="70"/>
    </location>
</feature>
<feature type="mutagenesis site" description="Smaller viral particles." evidence="3">
    <original>C</original>
    <variation>S</variation>
    <location>
        <position position="83"/>
    </location>
</feature>
<feature type="mutagenesis site" description="Smaller viral particles." evidence="3">
    <original>C</original>
    <variation>S</variation>
    <location>
        <position position="106"/>
    </location>
</feature>
<feature type="mutagenesis site" description="Complete loss of viral infectivity." evidence="3">
    <original>C</original>
    <variation>S</variation>
    <location>
        <position position="158"/>
    </location>
</feature>
<feature type="mutagenesis site" description="Complete loss of viral infectivity." evidence="3">
    <original>C</original>
    <variation>S</variation>
    <location>
        <position position="251"/>
    </location>
</feature>
<feature type="mutagenesis site" description="Larger viral particles." evidence="3">
    <original>C</original>
    <variation>A</variation>
    <variation>G</variation>
    <variation>S</variation>
    <location>
        <position position="295"/>
    </location>
</feature>
<keyword id="KW-1032">Host cell membrane</keyword>
<keyword id="KW-1035">Host cytoplasm</keyword>
<keyword id="KW-1043">Host membrane</keyword>
<keyword id="KW-0945">Host-virus interaction</keyword>
<keyword id="KW-0472">Membrane</keyword>
<keyword id="KW-0597">Phosphoprotein</keyword>
<keyword id="KW-1198">Viral budding</keyword>
<keyword id="KW-1187">Viral budding via the host ESCRT complexes</keyword>
<keyword id="KW-0468">Viral matrix protein</keyword>
<keyword id="KW-1188">Viral release from host cell</keyword>
<keyword id="KW-0946">Virion</keyword>
<gene>
    <name type="primary">M</name>
</gene>
<protein>
    <recommendedName>
        <fullName>Matrix protein</fullName>
        <shortName>M protein</shortName>
    </recommendedName>
</protein>
<organism>
    <name type="scientific">Sendai virus (strain Z)</name>
    <name type="common">SeV</name>
    <name type="synonym">Sendai virus (strain HVJ)</name>
    <dbReference type="NCBI Taxonomy" id="11198"/>
    <lineage>
        <taxon>Viruses</taxon>
        <taxon>Riboviria</taxon>
        <taxon>Orthornavirae</taxon>
        <taxon>Negarnaviricota</taxon>
        <taxon>Haploviricotina</taxon>
        <taxon>Monjiviricetes</taxon>
        <taxon>Mononegavirales</taxon>
        <taxon>Paramyxoviridae</taxon>
        <taxon>Feraresvirinae</taxon>
        <taxon>Respirovirus</taxon>
        <taxon>Respirovirus muris</taxon>
    </lineage>
</organism>
<proteinExistence type="evidence at protein level"/>
<sequence length="348" mass="38557">MADIYRFPKFSYEDNGTVEPLPLRTGPDKKAIPHIRIVKVGDPPKHGVRYLDLLLLGFFETPKQTTNLGSVSDLTEPTSYSICGSGSLPIGVAKYYGTDQELLKACTDLRITVRRTVRAGEMIVYMVDSIGAPLLPWSGRLRQGMIFNANKVALAPQCLPVDKDIRLRVVFVNGTSLGAITIAKIPKTLADLALPNSISVNLLVTLKTGISTEQKGVLPVLDDQGEKKLNFMVHLGLIRRKVGKIYSVEYCKSKIERMRLIFSLGLIGGISFHVQVNGTLSKTFMSQLAWKRAVCFPLMDVNPHMNMVIWAASVEITGVDAVFQPAIPRDFRYYPNVVAKNIGRIRKL</sequence>
<evidence type="ECO:0000250" key="1"/>
<evidence type="ECO:0000269" key="2">
    <source>
    </source>
</evidence>
<evidence type="ECO:0000269" key="3">
    <source>
    </source>
</evidence>
<evidence type="ECO:0000269" key="4">
    <source>
    </source>
</evidence>
<evidence type="ECO:0000269" key="5">
    <source>
    </source>
</evidence>
<evidence type="ECO:0000269" key="6">
    <source>
    </source>
</evidence>
<evidence type="ECO:0000269" key="7">
    <source>
    </source>
</evidence>
<evidence type="ECO:0000305" key="8"/>
<evidence type="ECO:0000305" key="9">
    <source>
    </source>
</evidence>
<accession>P06446</accession>
<accession>P27567</accession>
<accession>Q91UL5</accession>
<accession>Q9YIJ5</accession>
<accession>Q9YIM6</accession>
<accession>Q9YNG5</accession>
<accession>Q9YNG6</accession>
<accession>Q9YNG7</accession>
<accession>Q9YNG8</accession>
<accession>Q9YNG9</accession>
<accession>Q9YNH0</accession>
<accession>Q9YZ78</accession>
<dbReference type="EMBL" id="X00087">
    <property type="protein sequence ID" value="CAA24949.1"/>
    <property type="molecule type" value="Genomic_RNA"/>
</dbReference>
<dbReference type="EMBL" id="M30202">
    <property type="protein sequence ID" value="AAB06280.1"/>
    <property type="molecule type" value="Genomic_RNA"/>
</dbReference>
<dbReference type="EMBL" id="M30203">
    <property type="protein sequence ID" value="AAB06286.1"/>
    <property type="molecule type" value="Genomic_RNA"/>
</dbReference>
<dbReference type="EMBL" id="M30204">
    <property type="protein sequence ID" value="AAB06198.1"/>
    <property type="molecule type" value="Genomic_RNA"/>
</dbReference>
<dbReference type="EMBL" id="M69046">
    <property type="protein sequence ID" value="AAB06292.1"/>
    <property type="molecule type" value="Genomic_RNA"/>
</dbReference>
<dbReference type="EMBL" id="AF001284">
    <property type="protein sequence ID" value="AAC82321.1"/>
    <property type="molecule type" value="Genomic_RNA"/>
</dbReference>
<dbReference type="EMBL" id="U86424">
    <property type="protein sequence ID" value="AAC82304.1"/>
    <property type="molecule type" value="Genomic_DNA"/>
</dbReference>
<dbReference type="EMBL" id="U86425">
    <property type="protein sequence ID" value="AAC82305.1"/>
    <property type="molecule type" value="Genomic_DNA"/>
</dbReference>
<dbReference type="EMBL" id="U86426">
    <property type="protein sequence ID" value="AAC82306.1"/>
    <property type="molecule type" value="Genomic_DNA"/>
</dbReference>
<dbReference type="EMBL" id="U86427">
    <property type="protein sequence ID" value="AAC82307.1"/>
    <property type="molecule type" value="Genomic_DNA"/>
</dbReference>
<dbReference type="EMBL" id="U86428">
    <property type="protein sequence ID" value="AAC82308.1"/>
    <property type="molecule type" value="Genomic_DNA"/>
</dbReference>
<dbReference type="EMBL" id="U86429">
    <property type="protein sequence ID" value="AAC82309.1"/>
    <property type="molecule type" value="Genomic_DNA"/>
</dbReference>
<dbReference type="EMBL" id="U86430">
    <property type="protein sequence ID" value="AAC82310.1"/>
    <property type="molecule type" value="Genomic_DNA"/>
</dbReference>
<dbReference type="EMBL" id="U86431">
    <property type="protein sequence ID" value="AAC82311.1"/>
    <property type="molecule type" value="Genomic_DNA"/>
</dbReference>
<dbReference type="EMBL" id="U86432">
    <property type="protein sequence ID" value="AAC82312.1"/>
    <property type="molecule type" value="Genomic_DNA"/>
</dbReference>
<dbReference type="EMBL" id="U86433">
    <property type="protein sequence ID" value="AAC82313.1"/>
    <property type="molecule type" value="Genomic_DNA"/>
</dbReference>
<dbReference type="EMBL" id="U86434">
    <property type="protein sequence ID" value="AAC82314.1"/>
    <property type="molecule type" value="Genomic_DNA"/>
</dbReference>
<dbReference type="EMBL" id="U86435">
    <property type="protein sequence ID" value="AAC82315.1"/>
    <property type="molecule type" value="Genomic_DNA"/>
</dbReference>
<dbReference type="EMBL" id="U86436">
    <property type="protein sequence ID" value="AAC82316.1"/>
    <property type="molecule type" value="Genomic_DNA"/>
</dbReference>
<dbReference type="PIR" id="A04043">
    <property type="entry name" value="MFNZSV"/>
</dbReference>
<dbReference type="SMR" id="P06446"/>
<dbReference type="iPTMnet" id="P06446"/>
<dbReference type="Proteomes" id="UP000006560">
    <property type="component" value="Genome"/>
</dbReference>
<dbReference type="Proteomes" id="UP000110830">
    <property type="component" value="Genome"/>
</dbReference>
<dbReference type="Proteomes" id="UP000163956">
    <property type="component" value="Genome"/>
</dbReference>
<dbReference type="Proteomes" id="UP000169749">
    <property type="component" value="Genome"/>
</dbReference>
<dbReference type="Proteomes" id="UP000181310">
    <property type="component" value="Genome"/>
</dbReference>
<dbReference type="GO" id="GO:0030430">
    <property type="term" value="C:host cell cytoplasm"/>
    <property type="evidence" value="ECO:0007669"/>
    <property type="project" value="UniProtKB-SubCell"/>
</dbReference>
<dbReference type="GO" id="GO:0020002">
    <property type="term" value="C:host cell plasma membrane"/>
    <property type="evidence" value="ECO:0007669"/>
    <property type="project" value="UniProtKB-SubCell"/>
</dbReference>
<dbReference type="GO" id="GO:0016020">
    <property type="term" value="C:membrane"/>
    <property type="evidence" value="ECO:0007669"/>
    <property type="project" value="UniProtKB-KW"/>
</dbReference>
<dbReference type="GO" id="GO:0044423">
    <property type="term" value="C:virion component"/>
    <property type="evidence" value="ECO:0007669"/>
    <property type="project" value="UniProtKB-KW"/>
</dbReference>
<dbReference type="GO" id="GO:0039660">
    <property type="term" value="F:structural constituent of virion"/>
    <property type="evidence" value="ECO:0007669"/>
    <property type="project" value="UniProtKB-KW"/>
</dbReference>
<dbReference type="GO" id="GO:0039702">
    <property type="term" value="P:viral budding via host ESCRT complex"/>
    <property type="evidence" value="ECO:0007669"/>
    <property type="project" value="UniProtKB-KW"/>
</dbReference>
<dbReference type="FunFam" id="2.70.20.50:FF:000003">
    <property type="entry name" value="Matrix protein"/>
    <property type="match status" value="1"/>
</dbReference>
<dbReference type="Gene3D" id="2.70.20.60">
    <property type="entry name" value="Viral matrix protein, C-terminal domain"/>
    <property type="match status" value="1"/>
</dbReference>
<dbReference type="Gene3D" id="2.70.20.50">
    <property type="entry name" value="Viral matrix protein, N-terminal domain"/>
    <property type="match status" value="1"/>
</dbReference>
<dbReference type="InterPro" id="IPR042539">
    <property type="entry name" value="Matrix_C"/>
</dbReference>
<dbReference type="InterPro" id="IPR042540">
    <property type="entry name" value="Matrix_N"/>
</dbReference>
<dbReference type="InterPro" id="IPR055413">
    <property type="entry name" value="Matrix_Paramyxo_C"/>
</dbReference>
<dbReference type="InterPro" id="IPR000982">
    <property type="entry name" value="Matrix_Paramyxo_N"/>
</dbReference>
<dbReference type="Pfam" id="PF23765">
    <property type="entry name" value="Matrix_Paramyxo_C"/>
    <property type="match status" value="1"/>
</dbReference>
<dbReference type="Pfam" id="PF00661">
    <property type="entry name" value="Matrix_Paramyxo_N"/>
    <property type="match status" value="1"/>
</dbReference>
<name>MATRX_SENDZ</name>
<comment type="function">
    <text>Plays a crucial role in virion assembly and budding. Forms a shell at the inner face of the plasma membrane and concentrates the HN and F glycoproteins. Acts as a negative regulator for transcription and replication by sticking to the nucleocapsid. This effect might be regulated by the cytoplasmic interaction with tubulin that dissociates the M protein from the nucleocapsid.</text>
</comment>
<comment type="subunit">
    <text evidence="2 4 5">Homomultimer. Binds to the cytoplasmic regions of F and HN proteins. Interacts with nucleocapsid. Interacts with human alpha-tubulin and beta-tubulin. Interacts with host ANP32B.</text>
</comment>
<comment type="subcellular location">
    <subcellularLocation>
        <location evidence="8">Virion</location>
    </subcellularLocation>
    <subcellularLocation>
        <location evidence="6">Host cytoplasm</location>
    </subcellularLocation>
    <subcellularLocation>
        <location evidence="6">Host cell membrane</location>
        <topology evidence="6">Peripheral membrane protein</topology>
        <orientation evidence="6">Cytoplasmic side</orientation>
    </subcellularLocation>
    <text>During bud formation, associates at the inner side of the plasma membrane of infected cells.</text>
</comment>
<comment type="domain">
    <text evidence="1">Late-budding domains (L domains) are short sequence motifs essential for viral particle budding. They recruit proteins of the host ESCRT machinery (Endosomal Sorting Complex Required for Transport) or ESCRT-associated proteins. The matrix protein contains one L domain: a YLDL motif (By similarity).</text>
</comment>
<comment type="PTM">
    <text evidence="7">A large portion is phosphorylated in the cytoplasm, but not in virion. However, this phosphorylation is not essential for virus replication.</text>
</comment>
<comment type="similarity">
    <text evidence="8">Belongs to the morbillivirus/respirovirus/rubulavirus M protein family.</text>
</comment>
<reference key="1">
    <citation type="journal article" date="1984" name="Nucleic Acids Res.">
        <title>Nucleotide sequence of a Sendai virus genome region covering the entire M gene and the 3' proximal 1013 nucleotides of the F gene.</title>
        <authorList>
            <person name="Hidaka Y."/>
            <person name="Kanda T."/>
            <person name="Iwasaki K."/>
            <person name="Nomoto A."/>
            <person name="Shioda T."/>
            <person name="Shibuta H."/>
        </authorList>
    </citation>
    <scope>NUCLEOTIDE SEQUENCE [GENOMIC RNA]</scope>
</reference>
<reference key="2">
    <citation type="journal article" date="1990" name="Virology">
        <title>Nucleotide sequence analyses of the genes encoding the HN, M, NP, P, and L proteins of two host range mutants of Sendai virus.</title>
        <authorList>
            <person name="Middleton Y."/>
            <person name="Tashiro M."/>
            <person name="Thai T."/>
            <person name="Oh J."/>
            <person name="Seymour J."/>
            <person name="Pritzer E."/>
            <person name="Klenk H.-D."/>
            <person name="Rott R."/>
            <person name="Seto J.T."/>
        </authorList>
    </citation>
    <scope>NUCLEOTIDE SEQUENCE [GENOMIC RNA]</scope>
    <source>
        <strain>Mutant F1-R</strain>
        <strain>Mutant ts-f1</strain>
    </source>
</reference>
<reference key="3">
    <citation type="journal article" date="1991" name="Virology">
        <title>Pneumotropic revertants derived from a pantropic mutant, F1-R, of Sendai virus.</title>
        <authorList>
            <person name="Tashiro M."/>
            <person name="James I."/>
            <person name="Karri S."/>
            <person name="Wahn K."/>
            <person name="Tobita K."/>
            <person name="Klenk H.-D."/>
            <person name="Rott R."/>
            <person name="Seto J.T."/>
        </authorList>
    </citation>
    <scope>NUCLEOTIDE SEQUENCE [GENOMIC RNA]</scope>
    <source>
        <strain>Mutant F1-R / T-5 revertant</strain>
    </source>
</reference>
<reference key="4">
    <citation type="journal article" date="1992" name="Virology">
        <title>Budding site of Sendai virus in polarized epithelial cells is one of the determinants for tropism and pathogenicity in mice.</title>
        <authorList>
            <person name="Tashiro M."/>
            <person name="Seto J.T."/>
            <person name="Choosakul S."/>
            <person name="Yamakawa M."/>
            <person name="Klenk H.-D."/>
            <person name="Rott R."/>
        </authorList>
    </citation>
    <scope>NUCLEOTIDE SEQUENCE [GENOMIC RNA]</scope>
    <source>
        <strain>Mutant KD-11M</strain>
        <strain>Mutant KD-22M</strain>
        <strain>Mutant KD-32M</strain>
        <strain>Mutant KD-51M</strain>
        <strain>Mutant KD-52M</strain>
    </source>
</reference>
<reference key="5">
    <citation type="journal article" date="1998" name="Arch. Virol.">
        <title>Determinants of pantropism of the F1-R mutant of Sendai virus: specific mutations involved are in the F and M genes.</title>
        <authorList>
            <person name="Okada H."/>
            <person name="Seto J.T."/>
            <person name="McQueen N.L."/>
            <person name="Klenk H.-D."/>
            <person name="Rott R."/>
            <person name="Tashiro M."/>
        </authorList>
    </citation>
    <scope>NUCLEOTIDE SEQUENCE [GENOMIC RNA]</scope>
    <source>
        <strain>Mutant BF-13</strain>
        <strain>Mutant BF-132</strain>
        <strain>Mutant BF-53</strain>
        <strain>Mutant BF-82</strain>
        <strain>Mutant BY-4</strain>
        <strain>Mutant BY-41</strain>
        <strain>Mutant BY-5</strain>
        <strain>Mutant BY-8</strain>
    </source>
</reference>
<reference key="6">
    <citation type="journal article" date="1982" name="Virology">
        <title>Microscopy of internal structures of Sendai virus associated with the cytoplasmic surface of host membranes.</title>
        <authorList>
            <person name="Buechi M."/>
            <person name="Baechi T."/>
        </authorList>
    </citation>
    <scope>SUBCELLULAR LOCATION</scope>
</reference>
<reference key="7">
    <citation type="journal article" date="1997" name="Virology">
        <title>Phosphorylation of the Sendai virus M protein is not essential for virus replication either in vitro or in vivo.</title>
        <authorList>
            <person name="Sakaguchi T."/>
            <person name="Kiyotani K."/>
            <person name="Kato A."/>
            <person name="Asakawa M."/>
            <person name="Fujii Y."/>
            <person name="Nagai Y."/>
            <person name="Yoshida T."/>
        </authorList>
    </citation>
    <scope>PHOSPHORYLATION AT SER-70</scope>
    <scope>MUTAGENESIS OF SER-70</scope>
</reference>
<reference key="8">
    <citation type="journal article" date="2000" name="Virology">
        <title>Assembly of Sendai virus: M protein interacts with F and HN proteins and with the cytoplasmic tail and transmembrane domain of F protein.</title>
        <authorList>
            <person name="Ali A."/>
            <person name="Nayak D.P."/>
        </authorList>
    </citation>
    <scope>INTERACTION WITH F AND HN PROTEINS</scope>
</reference>
<reference key="9">
    <citation type="journal article" date="2002" name="J. Virol.">
        <title>Alteration of Sendai virus morphogenesis and nucleocapsid incorporation due to mutation of cysteine residues of the matrix protein.</title>
        <authorList>
            <person name="Sakaguchi T."/>
            <person name="Uchiyama T."/>
            <person name="Huang C."/>
            <person name="Fukuhara N."/>
            <person name="Kiyotani K."/>
            <person name="Nagai Y."/>
            <person name="Yoshida T."/>
        </authorList>
    </citation>
    <scope>MUTAGENESIS OF CYS-83; CYS-106; CYS-158; CYS-251 AND CYS-295</scope>
</reference>
<reference key="10">
    <citation type="journal article" date="2003" name="Biochem. Biophys. Res. Commun.">
        <title>Interaction of cellular tubulin with Sendai virus M protein regulates transcription of viral genome.</title>
        <authorList>
            <person name="Ogino T."/>
            <person name="Iwama M."/>
            <person name="Ohsawa Y."/>
            <person name="Mizumoto K."/>
        </authorList>
    </citation>
    <scope>INTERACTION WITH HUMAN ALPHA/BETA TUBULINS</scope>
</reference>
<reference key="11">
    <citation type="journal article" date="2020" name="J. Gen. Virol.">
        <title>Interaction of host cellular factor ANP32B with matrix proteins of different paramyxoviruses.</title>
        <authorList>
            <person name="Guenther M."/>
            <person name="Bauer A."/>
            <person name="Mueller M."/>
            <person name="Zaeck L."/>
            <person name="Finke S."/>
        </authorList>
    </citation>
    <scope>INTERACTION WITH HOST ANP32B</scope>
</reference>